<organism>
    <name type="scientific">Bifidobacterium longum (strain NCC 2705)</name>
    <dbReference type="NCBI Taxonomy" id="206672"/>
    <lineage>
        <taxon>Bacteria</taxon>
        <taxon>Bacillati</taxon>
        <taxon>Actinomycetota</taxon>
        <taxon>Actinomycetes</taxon>
        <taxon>Bifidobacteriales</taxon>
        <taxon>Bifidobacteriaceae</taxon>
        <taxon>Bifidobacterium</taxon>
    </lineage>
</organism>
<reference key="1">
    <citation type="journal article" date="2002" name="Proc. Natl. Acad. Sci. U.S.A.">
        <title>The genome sequence of Bifidobacterium longum reflects its adaptation to the human gastrointestinal tract.</title>
        <authorList>
            <person name="Schell M.A."/>
            <person name="Karmirantzou M."/>
            <person name="Snel B."/>
            <person name="Vilanova D."/>
            <person name="Berger B."/>
            <person name="Pessi G."/>
            <person name="Zwahlen M.-C."/>
            <person name="Desiere F."/>
            <person name="Bork P."/>
            <person name="Delley M."/>
            <person name="Pridmore R.D."/>
            <person name="Arigoni F."/>
        </authorList>
    </citation>
    <scope>NUCLEOTIDE SEQUENCE [LARGE SCALE GENOMIC DNA]</scope>
    <source>
        <strain>NCC 2705</strain>
    </source>
</reference>
<keyword id="KW-1003">Cell membrane</keyword>
<keyword id="KW-0407">Ion channel</keyword>
<keyword id="KW-0406">Ion transport</keyword>
<keyword id="KW-0472">Membrane</keyword>
<keyword id="KW-0479">Metal-binding</keyword>
<keyword id="KW-1185">Reference proteome</keyword>
<keyword id="KW-0915">Sodium</keyword>
<keyword id="KW-0812">Transmembrane</keyword>
<keyword id="KW-1133">Transmembrane helix</keyword>
<keyword id="KW-0813">Transport</keyword>
<name>FLUC1_BIFLO</name>
<feature type="chain" id="PRO_0000110059" description="Fluoride-specific ion channel FluC 1">
    <location>
        <begin position="1"/>
        <end position="131"/>
    </location>
</feature>
<feature type="transmembrane region" description="Helical" evidence="1">
    <location>
        <begin position="38"/>
        <end position="58"/>
    </location>
</feature>
<feature type="transmembrane region" description="Helical" evidence="1">
    <location>
        <begin position="69"/>
        <end position="89"/>
    </location>
</feature>
<feature type="transmembrane region" description="Helical" evidence="1">
    <location>
        <begin position="108"/>
        <end position="128"/>
    </location>
</feature>
<feature type="binding site" evidence="1">
    <location>
        <position position="79"/>
    </location>
    <ligand>
        <name>Na(+)</name>
        <dbReference type="ChEBI" id="CHEBI:29101"/>
        <note>structural</note>
    </ligand>
</feature>
<feature type="binding site" evidence="1">
    <location>
        <position position="82"/>
    </location>
    <ligand>
        <name>Na(+)</name>
        <dbReference type="ChEBI" id="CHEBI:29101"/>
        <note>structural</note>
    </ligand>
</feature>
<protein>
    <recommendedName>
        <fullName evidence="1">Fluoride-specific ion channel FluC 1</fullName>
    </recommendedName>
</protein>
<gene>
    <name evidence="1" type="primary">fluC1</name>
    <name evidence="1" type="synonym">crcB1</name>
    <name type="ordered locus">BL0547</name>
</gene>
<evidence type="ECO:0000255" key="1">
    <source>
        <dbReference type="HAMAP-Rule" id="MF_00454"/>
    </source>
</evidence>
<comment type="function">
    <text evidence="1">Fluoride-specific ion channel. Important for reducing fluoride concentration in the cell, thus reducing its toxicity.</text>
</comment>
<comment type="catalytic activity">
    <reaction evidence="1">
        <text>fluoride(in) = fluoride(out)</text>
        <dbReference type="Rhea" id="RHEA:76159"/>
        <dbReference type="ChEBI" id="CHEBI:17051"/>
    </reaction>
    <physiologicalReaction direction="left-to-right" evidence="1">
        <dbReference type="Rhea" id="RHEA:76160"/>
    </physiologicalReaction>
</comment>
<comment type="activity regulation">
    <text evidence="1">Na(+) is not transported, but it plays an essential structural role and its presence is essential for fluoride channel function.</text>
</comment>
<comment type="subcellular location">
    <subcellularLocation>
        <location evidence="1">Cell membrane</location>
        <topology evidence="1">Multi-pass membrane protein</topology>
    </subcellularLocation>
</comment>
<comment type="similarity">
    <text evidence="1">Belongs to the fluoride channel Fluc/FEX (TC 1.A.43) family.</text>
</comment>
<accession>Q8G6U1</accession>
<sequence length="131" mass="14201">MMWMICLFGGLGAMARYVLDVSIQRGWNRENRRTNRNFPLSTLVINGVASLCAGIAMMSYYSQSVDMDTVMMFVVGFLGGFSTFSTALNEVVSLIRQRRFTLALGYGIATVAVPLICVAAGFGIALLANPA</sequence>
<proteinExistence type="inferred from homology"/>
<dbReference type="EMBL" id="AE014295">
    <property type="protein sequence ID" value="AAN24371.1"/>
    <property type="molecule type" value="Genomic_DNA"/>
</dbReference>
<dbReference type="RefSeq" id="NP_695735.1">
    <property type="nucleotide sequence ID" value="NC_004307.2"/>
</dbReference>
<dbReference type="RefSeq" id="WP_007051665.1">
    <property type="nucleotide sequence ID" value="NC_004307.2"/>
</dbReference>
<dbReference type="SMR" id="Q8G6U1"/>
<dbReference type="STRING" id="206672.BL0547"/>
<dbReference type="EnsemblBacteria" id="AAN24371">
    <property type="protein sequence ID" value="AAN24371"/>
    <property type="gene ID" value="BL0547"/>
</dbReference>
<dbReference type="KEGG" id="blo:BL0547"/>
<dbReference type="PATRIC" id="fig|206672.9.peg.1290"/>
<dbReference type="HOGENOM" id="CLU_745282_0_0_11"/>
<dbReference type="OrthoDB" id="5148600at2"/>
<dbReference type="Proteomes" id="UP000000439">
    <property type="component" value="Chromosome"/>
</dbReference>
<dbReference type="GO" id="GO:0005886">
    <property type="term" value="C:plasma membrane"/>
    <property type="evidence" value="ECO:0007669"/>
    <property type="project" value="UniProtKB-SubCell"/>
</dbReference>
<dbReference type="GO" id="GO:0062054">
    <property type="term" value="F:fluoride channel activity"/>
    <property type="evidence" value="ECO:0007669"/>
    <property type="project" value="UniProtKB-UniRule"/>
</dbReference>
<dbReference type="GO" id="GO:0046872">
    <property type="term" value="F:metal ion binding"/>
    <property type="evidence" value="ECO:0007669"/>
    <property type="project" value="UniProtKB-KW"/>
</dbReference>
<dbReference type="GO" id="GO:0140114">
    <property type="term" value="P:cellular detoxification of fluoride"/>
    <property type="evidence" value="ECO:0007669"/>
    <property type="project" value="UniProtKB-UniRule"/>
</dbReference>
<dbReference type="HAMAP" id="MF_00454">
    <property type="entry name" value="FluC"/>
    <property type="match status" value="1"/>
</dbReference>
<dbReference type="InterPro" id="IPR003691">
    <property type="entry name" value="FluC"/>
</dbReference>
<dbReference type="PANTHER" id="PTHR28259">
    <property type="entry name" value="FLUORIDE EXPORT PROTEIN 1-RELATED"/>
    <property type="match status" value="1"/>
</dbReference>
<dbReference type="PANTHER" id="PTHR28259:SF1">
    <property type="entry name" value="FLUORIDE EXPORT PROTEIN 1-RELATED"/>
    <property type="match status" value="1"/>
</dbReference>
<dbReference type="Pfam" id="PF02537">
    <property type="entry name" value="CRCB"/>
    <property type="match status" value="1"/>
</dbReference>